<organism>
    <name type="scientific">Schizophyllum commune</name>
    <name type="common">Split gill fungus</name>
    <dbReference type="NCBI Taxonomy" id="5334"/>
    <lineage>
        <taxon>Eukaryota</taxon>
        <taxon>Fungi</taxon>
        <taxon>Dikarya</taxon>
        <taxon>Basidiomycota</taxon>
        <taxon>Agaricomycotina</taxon>
        <taxon>Agaricomycetes</taxon>
        <taxon>Agaricomycetidae</taxon>
        <taxon>Agaricales</taxon>
        <taxon>Schizophyllaceae</taxon>
        <taxon>Schizophyllum</taxon>
    </lineage>
</organism>
<dbReference type="EC" id="3.2.1.21"/>
<dbReference type="EMBL" id="M27313">
    <property type="protein sequence ID" value="AAA33925.1"/>
    <property type="molecule type" value="mRNA"/>
</dbReference>
<dbReference type="PIR" id="A28571">
    <property type="entry name" value="A28571"/>
</dbReference>
<dbReference type="SMR" id="P29091"/>
<dbReference type="CAZy" id="GH3">
    <property type="family name" value="Glycoside Hydrolase Family 3"/>
</dbReference>
<dbReference type="VEuPathDB" id="FungiDB:SCHCODRAFT_013228"/>
<dbReference type="UniPathway" id="UPA00696"/>
<dbReference type="GO" id="GO:0008422">
    <property type="term" value="F:beta-glucosidase activity"/>
    <property type="evidence" value="ECO:0007669"/>
    <property type="project" value="UniProtKB-EC"/>
</dbReference>
<dbReference type="GO" id="GO:0030245">
    <property type="term" value="P:cellulose catabolic process"/>
    <property type="evidence" value="ECO:0007669"/>
    <property type="project" value="UniProtKB-UniPathway"/>
</dbReference>
<dbReference type="Gene3D" id="3.40.50.1700">
    <property type="entry name" value="Glycoside hydrolase family 3 C-terminal domain"/>
    <property type="match status" value="1"/>
</dbReference>
<dbReference type="InterPro" id="IPR050288">
    <property type="entry name" value="Cellulose_deg_GH3"/>
</dbReference>
<dbReference type="InterPro" id="IPR002772">
    <property type="entry name" value="Glyco_hydro_3_C"/>
</dbReference>
<dbReference type="InterPro" id="IPR036881">
    <property type="entry name" value="Glyco_hydro_3_C_sf"/>
</dbReference>
<dbReference type="PANTHER" id="PTHR42715">
    <property type="entry name" value="BETA-GLUCOSIDASE"/>
    <property type="match status" value="1"/>
</dbReference>
<dbReference type="PANTHER" id="PTHR42715:SF2">
    <property type="entry name" value="BETA-GLUCOSIDASE F-RELATED"/>
    <property type="match status" value="1"/>
</dbReference>
<dbReference type="Pfam" id="PF01915">
    <property type="entry name" value="Glyco_hydro_3_C"/>
    <property type="match status" value="1"/>
</dbReference>
<dbReference type="SUPFAM" id="SSF52279">
    <property type="entry name" value="Beta-D-glucan exohydrolase, C-terminal domain"/>
    <property type="match status" value="1"/>
</dbReference>
<comment type="catalytic activity">
    <reaction>
        <text>Hydrolysis of terminal, non-reducing beta-D-glucosyl residues with release of beta-D-glucose.</text>
        <dbReference type="EC" id="3.2.1.21"/>
    </reaction>
</comment>
<comment type="pathway">
    <text>Glycan metabolism; cellulose degradation.</text>
</comment>
<comment type="similarity">
    <text evidence="1">Belongs to the glycosyl hydrolase 3 family.</text>
</comment>
<evidence type="ECO:0000305" key="1"/>
<protein>
    <recommendedName>
        <fullName>Beta-glucosidase</fullName>
        <ecNumber>3.2.1.21</ecNumber>
    </recommendedName>
    <alternativeName>
        <fullName>Beta-D-glucoside glucohydrolase</fullName>
    </alternativeName>
    <alternativeName>
        <fullName>Cellobiase</fullName>
    </alternativeName>
    <alternativeName>
        <fullName>Gentiobiase</fullName>
    </alternativeName>
</protein>
<proteinExistence type="evidence at transcript level"/>
<accession>P29091</accession>
<keyword id="KW-0119">Carbohydrate metabolism</keyword>
<keyword id="KW-0136">Cellulose degradation</keyword>
<keyword id="KW-0326">Glycosidase</keyword>
<keyword id="KW-0378">Hydrolase</keyword>
<keyword id="KW-0624">Polysaccharide degradation</keyword>
<sequence length="192" mass="20396">EFPYLITPLDAITARAQEDGTTVTSSLSDSDTARAAQIAAAADVAIVFISSDSGEGYLTVEGNAGDRNDLLAWHDGDALVQAVADANENTIVAVNTVGAIITEAWIEHPNVKAVVWSGLPGQEAGNSVADILYGAYNPSGRLPYTIAKSADDYPAQVLYESSAQVPDIDYSEGLLVDYRHFDANGIEPRFEF</sequence>
<reference key="1">
    <citation type="journal article" date="1986" name="Biochem. Int.">
        <title>A clone coding for Schizophyllum commune beta-glucosidase: homology with a yeast beta-glucosidase.</title>
        <authorList>
            <person name="Moranelli F."/>
            <person name="Barbier J.R."/>
            <person name="Dove M.J."/>
            <person name="Mackay R.M."/>
            <person name="Seligy V.L."/>
            <person name="Yaguchi M."/>
            <person name="Willick G.E."/>
        </authorList>
    </citation>
    <scope>NUCLEOTIDE SEQUENCE [MRNA]</scope>
</reference>
<name>BGLS_SCHCO</name>
<feature type="chain" id="PRO_0000210780" description="Beta-glucosidase">
    <location>
        <begin position="1" status="less than"/>
        <end position="192"/>
    </location>
</feature>
<feature type="non-terminal residue">
    <location>
        <position position="1"/>
    </location>
</feature>